<reference key="1">
    <citation type="journal article" date="2002" name="DNA Res.">
        <title>Complete genomic sequence of nitrogen-fixing symbiotic bacterium Bradyrhizobium japonicum USDA110.</title>
        <authorList>
            <person name="Kaneko T."/>
            <person name="Nakamura Y."/>
            <person name="Sato S."/>
            <person name="Minamisawa K."/>
            <person name="Uchiumi T."/>
            <person name="Sasamoto S."/>
            <person name="Watanabe A."/>
            <person name="Idesawa K."/>
            <person name="Iriguchi M."/>
            <person name="Kawashima K."/>
            <person name="Kohara M."/>
            <person name="Matsumoto M."/>
            <person name="Shimpo S."/>
            <person name="Tsuruoka H."/>
            <person name="Wada T."/>
            <person name="Yamada M."/>
            <person name="Tabata S."/>
        </authorList>
    </citation>
    <scope>NUCLEOTIDE SEQUENCE [LARGE SCALE GENOMIC DNA]</scope>
    <source>
        <strain>JCM 10833 / BCRC 13528 / IAM 13628 / NBRC 14792 / USDA 110</strain>
    </source>
</reference>
<dbReference type="EC" id="3.5.2.7" evidence="1"/>
<dbReference type="EMBL" id="BA000040">
    <property type="protein sequence ID" value="BAC51508.1"/>
    <property type="molecule type" value="Genomic_DNA"/>
</dbReference>
<dbReference type="RefSeq" id="NP_772883.1">
    <property type="nucleotide sequence ID" value="NC_004463.1"/>
</dbReference>
<dbReference type="RefSeq" id="WP_011088983.1">
    <property type="nucleotide sequence ID" value="NC_004463.1"/>
</dbReference>
<dbReference type="SMR" id="Q89GV2"/>
<dbReference type="STRING" id="224911.AAV28_28770"/>
<dbReference type="EnsemblBacteria" id="BAC51508">
    <property type="protein sequence ID" value="BAC51508"/>
    <property type="gene ID" value="BAC51508"/>
</dbReference>
<dbReference type="GeneID" id="46493231"/>
<dbReference type="KEGG" id="bja:bll6243"/>
<dbReference type="PATRIC" id="fig|224911.44.peg.6216"/>
<dbReference type="eggNOG" id="COG1228">
    <property type="taxonomic scope" value="Bacteria"/>
</dbReference>
<dbReference type="HOGENOM" id="CLU_041647_0_0_5"/>
<dbReference type="InParanoid" id="Q89GV2"/>
<dbReference type="OrthoDB" id="9776455at2"/>
<dbReference type="PhylomeDB" id="Q89GV2"/>
<dbReference type="UniPathway" id="UPA00379">
    <property type="reaction ID" value="UER00551"/>
</dbReference>
<dbReference type="Proteomes" id="UP000002526">
    <property type="component" value="Chromosome"/>
</dbReference>
<dbReference type="GO" id="GO:0005737">
    <property type="term" value="C:cytoplasm"/>
    <property type="evidence" value="ECO:0007669"/>
    <property type="project" value="UniProtKB-SubCell"/>
</dbReference>
<dbReference type="GO" id="GO:0050480">
    <property type="term" value="F:imidazolonepropionase activity"/>
    <property type="evidence" value="ECO:0000318"/>
    <property type="project" value="GO_Central"/>
</dbReference>
<dbReference type="GO" id="GO:0005506">
    <property type="term" value="F:iron ion binding"/>
    <property type="evidence" value="ECO:0007669"/>
    <property type="project" value="UniProtKB-UniRule"/>
</dbReference>
<dbReference type="GO" id="GO:0008270">
    <property type="term" value="F:zinc ion binding"/>
    <property type="evidence" value="ECO:0007669"/>
    <property type="project" value="UniProtKB-UniRule"/>
</dbReference>
<dbReference type="GO" id="GO:0006548">
    <property type="term" value="P:L-histidine catabolic process"/>
    <property type="evidence" value="ECO:0000318"/>
    <property type="project" value="GO_Central"/>
</dbReference>
<dbReference type="GO" id="GO:0019556">
    <property type="term" value="P:L-histidine catabolic process to glutamate and formamide"/>
    <property type="evidence" value="ECO:0007669"/>
    <property type="project" value="UniProtKB-UniPathway"/>
</dbReference>
<dbReference type="GO" id="GO:0019557">
    <property type="term" value="P:L-histidine catabolic process to glutamate and formate"/>
    <property type="evidence" value="ECO:0007669"/>
    <property type="project" value="UniProtKB-UniPathway"/>
</dbReference>
<dbReference type="CDD" id="cd01296">
    <property type="entry name" value="Imidazolone-5PH"/>
    <property type="match status" value="1"/>
</dbReference>
<dbReference type="FunFam" id="3.20.20.140:FF:000007">
    <property type="entry name" value="Imidazolonepropionase"/>
    <property type="match status" value="1"/>
</dbReference>
<dbReference type="Gene3D" id="3.20.20.140">
    <property type="entry name" value="Metal-dependent hydrolases"/>
    <property type="match status" value="1"/>
</dbReference>
<dbReference type="Gene3D" id="2.30.40.10">
    <property type="entry name" value="Urease, subunit C, domain 1"/>
    <property type="match status" value="1"/>
</dbReference>
<dbReference type="HAMAP" id="MF_00372">
    <property type="entry name" value="HutI"/>
    <property type="match status" value="1"/>
</dbReference>
<dbReference type="InterPro" id="IPR013108">
    <property type="entry name" value="Amidohydro_3"/>
</dbReference>
<dbReference type="InterPro" id="IPR005920">
    <property type="entry name" value="HutI"/>
</dbReference>
<dbReference type="InterPro" id="IPR011059">
    <property type="entry name" value="Metal-dep_hydrolase_composite"/>
</dbReference>
<dbReference type="InterPro" id="IPR032466">
    <property type="entry name" value="Metal_Hydrolase"/>
</dbReference>
<dbReference type="NCBIfam" id="TIGR01224">
    <property type="entry name" value="hutI"/>
    <property type="match status" value="1"/>
</dbReference>
<dbReference type="PANTHER" id="PTHR42752">
    <property type="entry name" value="IMIDAZOLONEPROPIONASE"/>
    <property type="match status" value="1"/>
</dbReference>
<dbReference type="PANTHER" id="PTHR42752:SF1">
    <property type="entry name" value="IMIDAZOLONEPROPIONASE-RELATED"/>
    <property type="match status" value="1"/>
</dbReference>
<dbReference type="Pfam" id="PF07969">
    <property type="entry name" value="Amidohydro_3"/>
    <property type="match status" value="1"/>
</dbReference>
<dbReference type="SUPFAM" id="SSF51338">
    <property type="entry name" value="Composite domain of metallo-dependent hydrolases"/>
    <property type="match status" value="1"/>
</dbReference>
<dbReference type="SUPFAM" id="SSF51556">
    <property type="entry name" value="Metallo-dependent hydrolases"/>
    <property type="match status" value="1"/>
</dbReference>
<name>HUTI_BRADU</name>
<feature type="chain" id="PRO_0000306440" description="Imidazolonepropionase">
    <location>
        <begin position="1"/>
        <end position="404"/>
    </location>
</feature>
<feature type="binding site" evidence="1">
    <location>
        <position position="73"/>
    </location>
    <ligand>
        <name>Fe(3+)</name>
        <dbReference type="ChEBI" id="CHEBI:29034"/>
    </ligand>
</feature>
<feature type="binding site" evidence="1">
    <location>
        <position position="73"/>
    </location>
    <ligand>
        <name>Zn(2+)</name>
        <dbReference type="ChEBI" id="CHEBI:29105"/>
    </ligand>
</feature>
<feature type="binding site" evidence="1">
    <location>
        <position position="75"/>
    </location>
    <ligand>
        <name>Fe(3+)</name>
        <dbReference type="ChEBI" id="CHEBI:29034"/>
    </ligand>
</feature>
<feature type="binding site" evidence="1">
    <location>
        <position position="75"/>
    </location>
    <ligand>
        <name>Zn(2+)</name>
        <dbReference type="ChEBI" id="CHEBI:29105"/>
    </ligand>
</feature>
<feature type="binding site" evidence="1">
    <location>
        <position position="82"/>
    </location>
    <ligand>
        <name>4-imidazolone-5-propanoate</name>
        <dbReference type="ChEBI" id="CHEBI:77893"/>
    </ligand>
</feature>
<feature type="binding site" evidence="1">
    <location>
        <position position="145"/>
    </location>
    <ligand>
        <name>4-imidazolone-5-propanoate</name>
        <dbReference type="ChEBI" id="CHEBI:77893"/>
    </ligand>
</feature>
<feature type="binding site" evidence="1">
    <location>
        <position position="145"/>
    </location>
    <ligand>
        <name>N-formimidoyl-L-glutamate</name>
        <dbReference type="ChEBI" id="CHEBI:58928"/>
    </ligand>
</feature>
<feature type="binding site" evidence="1">
    <location>
        <position position="178"/>
    </location>
    <ligand>
        <name>4-imidazolone-5-propanoate</name>
        <dbReference type="ChEBI" id="CHEBI:77893"/>
    </ligand>
</feature>
<feature type="binding site" evidence="1">
    <location>
        <position position="243"/>
    </location>
    <ligand>
        <name>Fe(3+)</name>
        <dbReference type="ChEBI" id="CHEBI:29034"/>
    </ligand>
</feature>
<feature type="binding site" evidence="1">
    <location>
        <position position="243"/>
    </location>
    <ligand>
        <name>Zn(2+)</name>
        <dbReference type="ChEBI" id="CHEBI:29105"/>
    </ligand>
</feature>
<feature type="binding site" evidence="1">
    <location>
        <position position="246"/>
    </location>
    <ligand>
        <name>4-imidazolone-5-propanoate</name>
        <dbReference type="ChEBI" id="CHEBI:77893"/>
    </ligand>
</feature>
<feature type="binding site" evidence="1">
    <location>
        <position position="318"/>
    </location>
    <ligand>
        <name>Fe(3+)</name>
        <dbReference type="ChEBI" id="CHEBI:29034"/>
    </ligand>
</feature>
<feature type="binding site" evidence="1">
    <location>
        <position position="318"/>
    </location>
    <ligand>
        <name>Zn(2+)</name>
        <dbReference type="ChEBI" id="CHEBI:29105"/>
    </ligand>
</feature>
<feature type="binding site" evidence="1">
    <location>
        <position position="320"/>
    </location>
    <ligand>
        <name>N-formimidoyl-L-glutamate</name>
        <dbReference type="ChEBI" id="CHEBI:58928"/>
    </ligand>
</feature>
<feature type="binding site" evidence="1">
    <location>
        <position position="322"/>
    </location>
    <ligand>
        <name>N-formimidoyl-L-glutamate</name>
        <dbReference type="ChEBI" id="CHEBI:58928"/>
    </ligand>
</feature>
<feature type="binding site" evidence="1">
    <location>
        <position position="323"/>
    </location>
    <ligand>
        <name>4-imidazolone-5-propanoate</name>
        <dbReference type="ChEBI" id="CHEBI:77893"/>
    </ligand>
</feature>
<gene>
    <name evidence="1" type="primary">hutI</name>
    <name type="ordered locus">bll6243</name>
</gene>
<comment type="function">
    <text evidence="1">Catalyzes the hydrolytic cleavage of the carbon-nitrogen bond in imidazolone-5-propanoate to yield N-formimidoyl-L-glutamate. It is the third step in the universal histidine degradation pathway.</text>
</comment>
<comment type="catalytic activity">
    <reaction evidence="1">
        <text>4-imidazolone-5-propanoate + H2O = N-formimidoyl-L-glutamate</text>
        <dbReference type="Rhea" id="RHEA:23660"/>
        <dbReference type="ChEBI" id="CHEBI:15377"/>
        <dbReference type="ChEBI" id="CHEBI:58928"/>
        <dbReference type="ChEBI" id="CHEBI:77893"/>
        <dbReference type="EC" id="3.5.2.7"/>
    </reaction>
</comment>
<comment type="cofactor">
    <cofactor evidence="1">
        <name>Zn(2+)</name>
        <dbReference type="ChEBI" id="CHEBI:29105"/>
    </cofactor>
    <cofactor evidence="1">
        <name>Fe(3+)</name>
        <dbReference type="ChEBI" id="CHEBI:29034"/>
    </cofactor>
    <text evidence="1">Binds 1 zinc or iron ion per subunit.</text>
</comment>
<comment type="pathway">
    <text evidence="1">Amino-acid degradation; L-histidine degradation into L-glutamate; N-formimidoyl-L-glutamate from L-histidine: step 3/3.</text>
</comment>
<comment type="subcellular location">
    <subcellularLocation>
        <location evidence="1">Cytoplasm</location>
    </subcellularLocation>
</comment>
<comment type="similarity">
    <text evidence="1">Belongs to the metallo-dependent hydrolases superfamily. HutI family.</text>
</comment>
<evidence type="ECO:0000255" key="1">
    <source>
        <dbReference type="HAMAP-Rule" id="MF_00372"/>
    </source>
</evidence>
<protein>
    <recommendedName>
        <fullName evidence="1">Imidazolonepropionase</fullName>
        <ecNumber evidence="1">3.5.2.7</ecNumber>
    </recommendedName>
    <alternativeName>
        <fullName evidence="1">Imidazolone-5-propionate hydrolase</fullName>
    </alternativeName>
</protein>
<organism>
    <name type="scientific">Bradyrhizobium diazoefficiens (strain JCM 10833 / BCRC 13528 / IAM 13628 / NBRC 14792 / USDA 110)</name>
    <dbReference type="NCBI Taxonomy" id="224911"/>
    <lineage>
        <taxon>Bacteria</taxon>
        <taxon>Pseudomonadati</taxon>
        <taxon>Pseudomonadota</taxon>
        <taxon>Alphaproteobacteria</taxon>
        <taxon>Hyphomicrobiales</taxon>
        <taxon>Nitrobacteraceae</taxon>
        <taxon>Bradyrhizobium</taxon>
    </lineage>
</organism>
<accession>Q89GV2</accession>
<sequence length="404" mass="43021">MAERFDRIWHNARLATMRADRPDLGEIEHGLIAARGGHIVYAGAAADFPADADAIKRIDCAGRWITPGLVDCHTHLVYGGNRAHEFELRLKGASYEEIARAGGGIVSTVAATRKASEAELVASALPRLDALIGEGATTVEIKSGYGLDAETEMRQLAAARSLGRQRPVAIRTSFLGAHALPPEADGDKDRYIDLVCKEMLPAVAKAGLADAVDTFMEGIAFSAGQTARVFETARGLGLPVKLHADQLSNLGGAALAAKFSALSADHLEHTDEAGAAAMAKAGTVAVLLPGAFYFIRETQKPPVESFRKHGVHMALASDCNPGSSPLTSLLLAMNMGATLFRMTVAECLAGVTREGAHALGVLDETGTLEAGKWCDLAIWDIERPAELVYRIGFNPLHRRVWRGQ</sequence>
<keyword id="KW-0963">Cytoplasm</keyword>
<keyword id="KW-0369">Histidine metabolism</keyword>
<keyword id="KW-0378">Hydrolase</keyword>
<keyword id="KW-0408">Iron</keyword>
<keyword id="KW-0479">Metal-binding</keyword>
<keyword id="KW-1185">Reference proteome</keyword>
<keyword id="KW-0862">Zinc</keyword>
<proteinExistence type="inferred from homology"/>